<keyword id="KW-0997">Cell inner membrane</keyword>
<keyword id="KW-1003">Cell membrane</keyword>
<keyword id="KW-0406">Ion transport</keyword>
<keyword id="KW-0472">Membrane</keyword>
<keyword id="KW-0915">Sodium</keyword>
<keyword id="KW-0739">Sodium transport</keyword>
<keyword id="KW-0769">Symport</keyword>
<keyword id="KW-0812">Transmembrane</keyword>
<keyword id="KW-1133">Transmembrane helix</keyword>
<keyword id="KW-0813">Transport</keyword>
<comment type="function">
    <text evidence="1">Transports acetate.</text>
</comment>
<comment type="subcellular location">
    <subcellularLocation>
        <location evidence="1">Cell inner membrane</location>
        <topology evidence="1">Multi-pass membrane protein</topology>
    </subcellularLocation>
</comment>
<comment type="similarity">
    <text evidence="1">Belongs to the sodium:solute symporter (SSF) (TC 2.A.21) family.</text>
</comment>
<sequence>MKRVLTALAATLPFAANAADAISGAVERQPTNWQAIIMFLIFVVFTLGITYWASKRVRSRNDYYTAGGNITGFQNGLAIAGDYMSAASFLGISALVFTSGYDGLIYSLGFLVGWPIILFLIAERLRNLGRYTFADVASYRLKQGPIRILSACGSLVVVALYLIAQMVGAGKLIELLFGLNYHIAVVLVGVLMMMYVLFGGMLATTWVQIIKAVLLLFGASFMAFMVMKHVGFSFNNLFSEAMAVHPKGVDIMKPGGLVKDPISALSLGLGLMFGTAGLPHILMRFFTVSDAREARKSVFYATGFMGYFYILTFIIGFGAIMLVGANPEYKDAAGHLIGGNNMAAVHLANAVGGNLFLGFISAVAFATILAVVAGLTLAGASAVSHDLYANVFKKGATEREELRVSKITVLILGVIAIILGVLFENQNIAFMVGLAFAIAASCNFPIILLSMYWSKLTTRGAMMGGWLGLITAVVLMILGPTIWVQILGHEKAIFPYEYPALFSITVAFLGIWFFSATDNSAEGARERELFRAQFIRSQTGFGVEQGRAH</sequence>
<dbReference type="EMBL" id="CU928158">
    <property type="protein sequence ID" value="CAQ91717.1"/>
    <property type="molecule type" value="Genomic_DNA"/>
</dbReference>
<dbReference type="RefSeq" id="WP_000832551.1">
    <property type="nucleotide sequence ID" value="NC_011740.1"/>
</dbReference>
<dbReference type="SMR" id="B7LMN9"/>
<dbReference type="GeneID" id="75059115"/>
<dbReference type="KEGG" id="efe:EFER_4298"/>
<dbReference type="HOGENOM" id="CLU_018808_8_3_6"/>
<dbReference type="OrthoDB" id="9764416at2"/>
<dbReference type="Proteomes" id="UP000000745">
    <property type="component" value="Chromosome"/>
</dbReference>
<dbReference type="GO" id="GO:0005886">
    <property type="term" value="C:plasma membrane"/>
    <property type="evidence" value="ECO:0007669"/>
    <property type="project" value="UniProtKB-SubCell"/>
</dbReference>
<dbReference type="GO" id="GO:0015123">
    <property type="term" value="F:acetate transmembrane transporter activity"/>
    <property type="evidence" value="ECO:0007669"/>
    <property type="project" value="UniProtKB-UniRule"/>
</dbReference>
<dbReference type="GO" id="GO:0043879">
    <property type="term" value="F:glycolate transmembrane transporter activity"/>
    <property type="evidence" value="ECO:0007669"/>
    <property type="project" value="InterPro"/>
</dbReference>
<dbReference type="GO" id="GO:0015293">
    <property type="term" value="F:symporter activity"/>
    <property type="evidence" value="ECO:0007669"/>
    <property type="project" value="UniProtKB-KW"/>
</dbReference>
<dbReference type="GO" id="GO:0006847">
    <property type="term" value="P:plasma membrane acetate transport"/>
    <property type="evidence" value="ECO:0007669"/>
    <property type="project" value="TreeGrafter"/>
</dbReference>
<dbReference type="GO" id="GO:0006814">
    <property type="term" value="P:sodium ion transport"/>
    <property type="evidence" value="ECO:0007669"/>
    <property type="project" value="UniProtKB-KW"/>
</dbReference>
<dbReference type="CDD" id="cd11480">
    <property type="entry name" value="SLC5sbd_u4"/>
    <property type="match status" value="1"/>
</dbReference>
<dbReference type="FunFam" id="1.20.1730.10:FF:000001">
    <property type="entry name" value="Cation/acetate symporter ActP"/>
    <property type="match status" value="1"/>
</dbReference>
<dbReference type="Gene3D" id="1.20.1730.10">
    <property type="entry name" value="Sodium/glucose cotransporter"/>
    <property type="match status" value="1"/>
</dbReference>
<dbReference type="HAMAP" id="MF_01426">
    <property type="entry name" value="Acet_symport_ActP"/>
    <property type="match status" value="1"/>
</dbReference>
<dbReference type="InterPro" id="IPR014083">
    <property type="entry name" value="Cation/Ac_symporter_ActP"/>
</dbReference>
<dbReference type="InterPro" id="IPR038377">
    <property type="entry name" value="Na/Glc_symporter_sf"/>
</dbReference>
<dbReference type="InterPro" id="IPR001734">
    <property type="entry name" value="Na/solute_symporter"/>
</dbReference>
<dbReference type="InterPro" id="IPR018212">
    <property type="entry name" value="Na/solute_symporter_CS"/>
</dbReference>
<dbReference type="InterPro" id="IPR050277">
    <property type="entry name" value="Sodium:Solute_Symporter"/>
</dbReference>
<dbReference type="NCBIfam" id="NF006903">
    <property type="entry name" value="PRK09395.1"/>
    <property type="match status" value="1"/>
</dbReference>
<dbReference type="NCBIfam" id="NF009135">
    <property type="entry name" value="PRK12488.1"/>
    <property type="match status" value="1"/>
</dbReference>
<dbReference type="NCBIfam" id="TIGR00813">
    <property type="entry name" value="sss"/>
    <property type="match status" value="1"/>
</dbReference>
<dbReference type="NCBIfam" id="TIGR02711">
    <property type="entry name" value="symport_actP"/>
    <property type="match status" value="1"/>
</dbReference>
<dbReference type="PANTHER" id="PTHR48086:SF6">
    <property type="entry name" value="CATION_ACETATE SYMPORTER ACTP"/>
    <property type="match status" value="1"/>
</dbReference>
<dbReference type="PANTHER" id="PTHR48086">
    <property type="entry name" value="SODIUM/PROLINE SYMPORTER-RELATED"/>
    <property type="match status" value="1"/>
</dbReference>
<dbReference type="Pfam" id="PF00474">
    <property type="entry name" value="SSF"/>
    <property type="match status" value="1"/>
</dbReference>
<dbReference type="PROSITE" id="PS00456">
    <property type="entry name" value="NA_SOLUT_SYMP_1"/>
    <property type="match status" value="1"/>
</dbReference>
<dbReference type="PROSITE" id="PS00457">
    <property type="entry name" value="NA_SOLUT_SYMP_2"/>
    <property type="match status" value="1"/>
</dbReference>
<dbReference type="PROSITE" id="PS50283">
    <property type="entry name" value="NA_SOLUT_SYMP_3"/>
    <property type="match status" value="1"/>
</dbReference>
<accession>B7LMN9</accession>
<reference key="1">
    <citation type="journal article" date="2009" name="PLoS Genet.">
        <title>Organised genome dynamics in the Escherichia coli species results in highly diverse adaptive paths.</title>
        <authorList>
            <person name="Touchon M."/>
            <person name="Hoede C."/>
            <person name="Tenaillon O."/>
            <person name="Barbe V."/>
            <person name="Baeriswyl S."/>
            <person name="Bidet P."/>
            <person name="Bingen E."/>
            <person name="Bonacorsi S."/>
            <person name="Bouchier C."/>
            <person name="Bouvet O."/>
            <person name="Calteau A."/>
            <person name="Chiapello H."/>
            <person name="Clermont O."/>
            <person name="Cruveiller S."/>
            <person name="Danchin A."/>
            <person name="Diard M."/>
            <person name="Dossat C."/>
            <person name="Karoui M.E."/>
            <person name="Frapy E."/>
            <person name="Garry L."/>
            <person name="Ghigo J.M."/>
            <person name="Gilles A.M."/>
            <person name="Johnson J."/>
            <person name="Le Bouguenec C."/>
            <person name="Lescat M."/>
            <person name="Mangenot S."/>
            <person name="Martinez-Jehanne V."/>
            <person name="Matic I."/>
            <person name="Nassif X."/>
            <person name="Oztas S."/>
            <person name="Petit M.A."/>
            <person name="Pichon C."/>
            <person name="Rouy Z."/>
            <person name="Ruf C.S."/>
            <person name="Schneider D."/>
            <person name="Tourret J."/>
            <person name="Vacherie B."/>
            <person name="Vallenet D."/>
            <person name="Medigue C."/>
            <person name="Rocha E.P.C."/>
            <person name="Denamur E."/>
        </authorList>
    </citation>
    <scope>NUCLEOTIDE SEQUENCE [LARGE SCALE GENOMIC DNA]</scope>
    <source>
        <strain>ATCC 35469 / DSM 13698 / BCRC 15582 / CCUG 18766 / IAM 14443 / JCM 21226 / LMG 7866 / NBRC 102419 / NCTC 12128 / CDC 0568-73</strain>
    </source>
</reference>
<organism>
    <name type="scientific">Escherichia fergusonii (strain ATCC 35469 / DSM 13698 / CCUG 18766 / IAM 14443 / JCM 21226 / LMG 7866 / NBRC 102419 / NCTC 12128 / CDC 0568-73)</name>
    <dbReference type="NCBI Taxonomy" id="585054"/>
    <lineage>
        <taxon>Bacteria</taxon>
        <taxon>Pseudomonadati</taxon>
        <taxon>Pseudomonadota</taxon>
        <taxon>Gammaproteobacteria</taxon>
        <taxon>Enterobacterales</taxon>
        <taxon>Enterobacteriaceae</taxon>
        <taxon>Escherichia</taxon>
    </lineage>
</organism>
<protein>
    <recommendedName>
        <fullName evidence="1">Cation/acetate symporter ActP</fullName>
    </recommendedName>
    <alternativeName>
        <fullName evidence="1">Acetate permease</fullName>
    </alternativeName>
    <alternativeName>
        <fullName evidence="1">Acetate transporter ActP</fullName>
    </alternativeName>
</protein>
<evidence type="ECO:0000255" key="1">
    <source>
        <dbReference type="HAMAP-Rule" id="MF_01426"/>
    </source>
</evidence>
<proteinExistence type="inferred from homology"/>
<gene>
    <name evidence="1" type="primary">actP</name>
    <name type="ordered locus">EFER_4298</name>
</gene>
<name>ACTP_ESCF3</name>
<feature type="chain" id="PRO_1000145720" description="Cation/acetate symporter ActP">
    <location>
        <begin position="1"/>
        <end position="549"/>
    </location>
</feature>
<feature type="transmembrane region" description="Helical" evidence="1">
    <location>
        <begin position="33"/>
        <end position="53"/>
    </location>
</feature>
<feature type="transmembrane region" description="Helical" evidence="1">
    <location>
        <begin position="77"/>
        <end position="97"/>
    </location>
</feature>
<feature type="transmembrane region" description="Helical" evidence="1">
    <location>
        <begin position="103"/>
        <end position="123"/>
    </location>
</feature>
<feature type="transmembrane region" description="Helical" evidence="1">
    <location>
        <begin position="148"/>
        <end position="168"/>
    </location>
</feature>
<feature type="transmembrane region" description="Helical" evidence="1">
    <location>
        <begin position="183"/>
        <end position="203"/>
    </location>
</feature>
<feature type="transmembrane region" description="Helical" evidence="1">
    <location>
        <begin position="206"/>
        <end position="226"/>
    </location>
</feature>
<feature type="transmembrane region" description="Helical" evidence="1">
    <location>
        <begin position="262"/>
        <end position="282"/>
    </location>
</feature>
<feature type="transmembrane region" description="Helical" evidence="1">
    <location>
        <begin position="303"/>
        <end position="323"/>
    </location>
</feature>
<feature type="transmembrane region" description="Helical" evidence="1">
    <location>
        <begin position="355"/>
        <end position="375"/>
    </location>
</feature>
<feature type="transmembrane region" description="Helical" evidence="1">
    <location>
        <begin position="404"/>
        <end position="424"/>
    </location>
</feature>
<feature type="transmembrane region" description="Helical" evidence="1">
    <location>
        <begin position="428"/>
        <end position="448"/>
    </location>
</feature>
<feature type="transmembrane region" description="Helical" evidence="1">
    <location>
        <begin position="464"/>
        <end position="484"/>
    </location>
</feature>
<feature type="transmembrane region" description="Helical" evidence="1">
    <location>
        <begin position="493"/>
        <end position="513"/>
    </location>
</feature>